<evidence type="ECO:0000256" key="1">
    <source>
        <dbReference type="SAM" id="MobiDB-lite"/>
    </source>
</evidence>
<proteinExistence type="predicted"/>
<organism>
    <name type="scientific">Schizosaccharomyces pombe (strain 972 / ATCC 24843)</name>
    <name type="common">Fission yeast</name>
    <dbReference type="NCBI Taxonomy" id="284812"/>
    <lineage>
        <taxon>Eukaryota</taxon>
        <taxon>Fungi</taxon>
        <taxon>Dikarya</taxon>
        <taxon>Ascomycota</taxon>
        <taxon>Taphrinomycotina</taxon>
        <taxon>Schizosaccharomycetes</taxon>
        <taxon>Schizosaccharomycetales</taxon>
        <taxon>Schizosaccharomycetaceae</taxon>
        <taxon>Schizosaccharomyces</taxon>
    </lineage>
</organism>
<accession>Q10203</accession>
<sequence>MSFVDGVNSWFSAASYWDGLGPTNVVQPEDDLAFVSQFEEVESAYDNLVKNGMIAPRRKNSFASSVNNPFSTSALSEALNGSVSMSHVPSSGLLKSTLSSTPTAGSNLLGTSPAEPASGLVGSSGFGSSMLGSSLPGNATSNFGSQASTSLLHPRRSTTSLLSSSAHHSRSSYYDLATPTRSSFSYNTVGAASLPSGGLSNLSSSLRSSSKSAGFSLFESASNSFTPSSFIESANMESLSIPSRRRPSSIAPIGTRPSRKEIAFSNSSTPTDQTLRPPNPPAANGNATPVTAVNNVSAVADSPQSTGSSVSSSLPTLSLDFKQEYSGNNHDMSGLSSSLSKSHNSTSALSSQIWSSPCASTLGGVNVW</sequence>
<name>YBX5_SCHPO</name>
<protein>
    <recommendedName>
        <fullName>Uncharacterized protein C17D1.05</fullName>
    </recommendedName>
</protein>
<gene>
    <name type="ORF">SPBC17D1.05</name>
</gene>
<feature type="chain" id="PRO_0000116530" description="Uncharacterized protein C17D1.05">
    <location>
        <begin position="1"/>
        <end position="368"/>
    </location>
</feature>
<feature type="region of interest" description="Disordered" evidence="1">
    <location>
        <begin position="237"/>
        <end position="287"/>
    </location>
</feature>
<feature type="compositionally biased region" description="Low complexity" evidence="1">
    <location>
        <begin position="238"/>
        <end position="253"/>
    </location>
</feature>
<feature type="compositionally biased region" description="Polar residues" evidence="1">
    <location>
        <begin position="264"/>
        <end position="276"/>
    </location>
</feature>
<keyword id="KW-1185">Reference proteome</keyword>
<reference key="1">
    <citation type="journal article" date="2002" name="Nature">
        <title>The genome sequence of Schizosaccharomyces pombe.</title>
        <authorList>
            <person name="Wood V."/>
            <person name="Gwilliam R."/>
            <person name="Rajandream M.A."/>
            <person name="Lyne M.H."/>
            <person name="Lyne R."/>
            <person name="Stewart A."/>
            <person name="Sgouros J.G."/>
            <person name="Peat N."/>
            <person name="Hayles J."/>
            <person name="Baker S.G."/>
            <person name="Basham D."/>
            <person name="Bowman S."/>
            <person name="Brooks K."/>
            <person name="Brown D."/>
            <person name="Brown S."/>
            <person name="Chillingworth T."/>
            <person name="Churcher C.M."/>
            <person name="Collins M."/>
            <person name="Connor R."/>
            <person name="Cronin A."/>
            <person name="Davis P."/>
            <person name="Feltwell T."/>
            <person name="Fraser A."/>
            <person name="Gentles S."/>
            <person name="Goble A."/>
            <person name="Hamlin N."/>
            <person name="Harris D.E."/>
            <person name="Hidalgo J."/>
            <person name="Hodgson G."/>
            <person name="Holroyd S."/>
            <person name="Hornsby T."/>
            <person name="Howarth S."/>
            <person name="Huckle E.J."/>
            <person name="Hunt S."/>
            <person name="Jagels K."/>
            <person name="James K.D."/>
            <person name="Jones L."/>
            <person name="Jones M."/>
            <person name="Leather S."/>
            <person name="McDonald S."/>
            <person name="McLean J."/>
            <person name="Mooney P."/>
            <person name="Moule S."/>
            <person name="Mungall K.L."/>
            <person name="Murphy L.D."/>
            <person name="Niblett D."/>
            <person name="Odell C."/>
            <person name="Oliver K."/>
            <person name="O'Neil S."/>
            <person name="Pearson D."/>
            <person name="Quail M.A."/>
            <person name="Rabbinowitsch E."/>
            <person name="Rutherford K.M."/>
            <person name="Rutter S."/>
            <person name="Saunders D."/>
            <person name="Seeger K."/>
            <person name="Sharp S."/>
            <person name="Skelton J."/>
            <person name="Simmonds M.N."/>
            <person name="Squares R."/>
            <person name="Squares S."/>
            <person name="Stevens K."/>
            <person name="Taylor K."/>
            <person name="Taylor R.G."/>
            <person name="Tivey A."/>
            <person name="Walsh S.V."/>
            <person name="Warren T."/>
            <person name="Whitehead S."/>
            <person name="Woodward J.R."/>
            <person name="Volckaert G."/>
            <person name="Aert R."/>
            <person name="Robben J."/>
            <person name="Grymonprez B."/>
            <person name="Weltjens I."/>
            <person name="Vanstreels E."/>
            <person name="Rieger M."/>
            <person name="Schaefer M."/>
            <person name="Mueller-Auer S."/>
            <person name="Gabel C."/>
            <person name="Fuchs M."/>
            <person name="Duesterhoeft A."/>
            <person name="Fritzc C."/>
            <person name="Holzer E."/>
            <person name="Moestl D."/>
            <person name="Hilbert H."/>
            <person name="Borzym K."/>
            <person name="Langer I."/>
            <person name="Beck A."/>
            <person name="Lehrach H."/>
            <person name="Reinhardt R."/>
            <person name="Pohl T.M."/>
            <person name="Eger P."/>
            <person name="Zimmermann W."/>
            <person name="Wedler H."/>
            <person name="Wambutt R."/>
            <person name="Purnelle B."/>
            <person name="Goffeau A."/>
            <person name="Cadieu E."/>
            <person name="Dreano S."/>
            <person name="Gloux S."/>
            <person name="Lelaure V."/>
            <person name="Mottier S."/>
            <person name="Galibert F."/>
            <person name="Aves S.J."/>
            <person name="Xiang Z."/>
            <person name="Hunt C."/>
            <person name="Moore K."/>
            <person name="Hurst S.M."/>
            <person name="Lucas M."/>
            <person name="Rochet M."/>
            <person name="Gaillardin C."/>
            <person name="Tallada V.A."/>
            <person name="Garzon A."/>
            <person name="Thode G."/>
            <person name="Daga R.R."/>
            <person name="Cruzado L."/>
            <person name="Jimenez J."/>
            <person name="Sanchez M."/>
            <person name="del Rey F."/>
            <person name="Benito J."/>
            <person name="Dominguez A."/>
            <person name="Revuelta J.L."/>
            <person name="Moreno S."/>
            <person name="Armstrong J."/>
            <person name="Forsburg S.L."/>
            <person name="Cerutti L."/>
            <person name="Lowe T."/>
            <person name="McCombie W.R."/>
            <person name="Paulsen I."/>
            <person name="Potashkin J."/>
            <person name="Shpakovski G.V."/>
            <person name="Ussery D."/>
            <person name="Barrell B.G."/>
            <person name="Nurse P."/>
        </authorList>
    </citation>
    <scope>NUCLEOTIDE SEQUENCE [LARGE SCALE GENOMIC DNA]</scope>
    <source>
        <strain>972 / ATCC 24843</strain>
    </source>
</reference>
<dbReference type="EMBL" id="CU329671">
    <property type="protein sequence ID" value="CAA20429.1"/>
    <property type="molecule type" value="Genomic_DNA"/>
</dbReference>
<dbReference type="PIR" id="T39708">
    <property type="entry name" value="S67387"/>
</dbReference>
<dbReference type="SMR" id="Q10203"/>
<dbReference type="BioGRID" id="276389">
    <property type="interactions" value="30"/>
</dbReference>
<dbReference type="iPTMnet" id="Q10203"/>
<dbReference type="PaxDb" id="4896-SPBC17D1.05.1"/>
<dbReference type="EnsemblFungi" id="SPBC17D1.05.1">
    <property type="protein sequence ID" value="SPBC17D1.05.1:pep"/>
    <property type="gene ID" value="SPBC17D1.05"/>
</dbReference>
<dbReference type="KEGG" id="spo:2539841"/>
<dbReference type="PomBase" id="SPBC17D1.05"/>
<dbReference type="VEuPathDB" id="FungiDB:SPBC17D1.05"/>
<dbReference type="HOGENOM" id="CLU_746303_0_0_1"/>
<dbReference type="InParanoid" id="Q10203"/>
<dbReference type="OMA" id="VNSWFSA"/>
<dbReference type="PRO" id="PR:Q10203"/>
<dbReference type="Proteomes" id="UP000002485">
    <property type="component" value="Chromosome II"/>
</dbReference>
<dbReference type="GO" id="GO:0005829">
    <property type="term" value="C:cytosol"/>
    <property type="evidence" value="ECO:0007005"/>
    <property type="project" value="PomBase"/>
</dbReference>
<dbReference type="GO" id="GO:0034605">
    <property type="term" value="P:cellular response to heat"/>
    <property type="evidence" value="ECO:0000269"/>
    <property type="project" value="PomBase"/>
</dbReference>